<accession>C6BVJ9</accession>
<dbReference type="EC" id="6.1.1.21" evidence="1"/>
<dbReference type="EMBL" id="CP001649">
    <property type="protein sequence ID" value="ACS78213.1"/>
    <property type="molecule type" value="Genomic_DNA"/>
</dbReference>
<dbReference type="RefSeq" id="WP_012765739.1">
    <property type="nucleotide sequence ID" value="NC_012881.1"/>
</dbReference>
<dbReference type="SMR" id="C6BVJ9"/>
<dbReference type="STRING" id="526222.Desal_0142"/>
<dbReference type="KEGG" id="dsa:Desal_0142"/>
<dbReference type="eggNOG" id="COG0124">
    <property type="taxonomic scope" value="Bacteria"/>
</dbReference>
<dbReference type="HOGENOM" id="CLU_025113_1_1_7"/>
<dbReference type="OrthoDB" id="9800814at2"/>
<dbReference type="Proteomes" id="UP000002601">
    <property type="component" value="Chromosome"/>
</dbReference>
<dbReference type="GO" id="GO:0005737">
    <property type="term" value="C:cytoplasm"/>
    <property type="evidence" value="ECO:0007669"/>
    <property type="project" value="UniProtKB-SubCell"/>
</dbReference>
<dbReference type="GO" id="GO:0005524">
    <property type="term" value="F:ATP binding"/>
    <property type="evidence" value="ECO:0007669"/>
    <property type="project" value="UniProtKB-UniRule"/>
</dbReference>
<dbReference type="GO" id="GO:0004821">
    <property type="term" value="F:histidine-tRNA ligase activity"/>
    <property type="evidence" value="ECO:0007669"/>
    <property type="project" value="UniProtKB-UniRule"/>
</dbReference>
<dbReference type="GO" id="GO:0006427">
    <property type="term" value="P:histidyl-tRNA aminoacylation"/>
    <property type="evidence" value="ECO:0007669"/>
    <property type="project" value="UniProtKB-UniRule"/>
</dbReference>
<dbReference type="CDD" id="cd00773">
    <property type="entry name" value="HisRS-like_core"/>
    <property type="match status" value="1"/>
</dbReference>
<dbReference type="Gene3D" id="3.40.50.800">
    <property type="entry name" value="Anticodon-binding domain"/>
    <property type="match status" value="1"/>
</dbReference>
<dbReference type="Gene3D" id="3.30.930.10">
    <property type="entry name" value="Bira Bifunctional Protein, Domain 2"/>
    <property type="match status" value="1"/>
</dbReference>
<dbReference type="HAMAP" id="MF_00127">
    <property type="entry name" value="His_tRNA_synth"/>
    <property type="match status" value="1"/>
</dbReference>
<dbReference type="InterPro" id="IPR006195">
    <property type="entry name" value="aa-tRNA-synth_II"/>
</dbReference>
<dbReference type="InterPro" id="IPR045864">
    <property type="entry name" value="aa-tRNA-synth_II/BPL/LPL"/>
</dbReference>
<dbReference type="InterPro" id="IPR004154">
    <property type="entry name" value="Anticodon-bd"/>
</dbReference>
<dbReference type="InterPro" id="IPR036621">
    <property type="entry name" value="Anticodon-bd_dom_sf"/>
</dbReference>
<dbReference type="InterPro" id="IPR015807">
    <property type="entry name" value="His-tRNA-ligase"/>
</dbReference>
<dbReference type="InterPro" id="IPR041715">
    <property type="entry name" value="HisRS-like_core"/>
</dbReference>
<dbReference type="InterPro" id="IPR004516">
    <property type="entry name" value="HisRS/HisZ"/>
</dbReference>
<dbReference type="NCBIfam" id="TIGR00442">
    <property type="entry name" value="hisS"/>
    <property type="match status" value="1"/>
</dbReference>
<dbReference type="PANTHER" id="PTHR43707:SF1">
    <property type="entry name" value="HISTIDINE--TRNA LIGASE, MITOCHONDRIAL-RELATED"/>
    <property type="match status" value="1"/>
</dbReference>
<dbReference type="PANTHER" id="PTHR43707">
    <property type="entry name" value="HISTIDYL-TRNA SYNTHETASE"/>
    <property type="match status" value="1"/>
</dbReference>
<dbReference type="Pfam" id="PF03129">
    <property type="entry name" value="HGTP_anticodon"/>
    <property type="match status" value="1"/>
</dbReference>
<dbReference type="Pfam" id="PF13393">
    <property type="entry name" value="tRNA-synt_His"/>
    <property type="match status" value="1"/>
</dbReference>
<dbReference type="PIRSF" id="PIRSF001549">
    <property type="entry name" value="His-tRNA_synth"/>
    <property type="match status" value="1"/>
</dbReference>
<dbReference type="SUPFAM" id="SSF52954">
    <property type="entry name" value="Class II aaRS ABD-related"/>
    <property type="match status" value="1"/>
</dbReference>
<dbReference type="SUPFAM" id="SSF55681">
    <property type="entry name" value="Class II aaRS and biotin synthetases"/>
    <property type="match status" value="1"/>
</dbReference>
<dbReference type="PROSITE" id="PS50862">
    <property type="entry name" value="AA_TRNA_LIGASE_II"/>
    <property type="match status" value="1"/>
</dbReference>
<keyword id="KW-0030">Aminoacyl-tRNA synthetase</keyword>
<keyword id="KW-0067">ATP-binding</keyword>
<keyword id="KW-0963">Cytoplasm</keyword>
<keyword id="KW-0436">Ligase</keyword>
<keyword id="KW-0547">Nucleotide-binding</keyword>
<keyword id="KW-0648">Protein biosynthesis</keyword>
<keyword id="KW-1185">Reference proteome</keyword>
<organism>
    <name type="scientific">Maridesulfovibrio salexigens (strain ATCC 14822 / DSM 2638 / NCIMB 8403 / VKM B-1763)</name>
    <name type="common">Desulfovibrio salexigens</name>
    <dbReference type="NCBI Taxonomy" id="526222"/>
    <lineage>
        <taxon>Bacteria</taxon>
        <taxon>Pseudomonadati</taxon>
        <taxon>Thermodesulfobacteriota</taxon>
        <taxon>Desulfovibrionia</taxon>
        <taxon>Desulfovibrionales</taxon>
        <taxon>Desulfovibrionaceae</taxon>
        <taxon>Maridesulfovibrio</taxon>
    </lineage>
</organism>
<feature type="chain" id="PRO_1000203131" description="Histidine--tRNA ligase">
    <location>
        <begin position="1"/>
        <end position="412"/>
    </location>
</feature>
<name>SYH_MARSD</name>
<evidence type="ECO:0000255" key="1">
    <source>
        <dbReference type="HAMAP-Rule" id="MF_00127"/>
    </source>
</evidence>
<reference key="1">
    <citation type="submission" date="2009-06" db="EMBL/GenBank/DDBJ databases">
        <title>Complete sequence of Desulfovibrio salexigens DSM 2638.</title>
        <authorList>
            <consortium name="US DOE Joint Genome Institute"/>
            <person name="Lucas S."/>
            <person name="Copeland A."/>
            <person name="Lapidus A."/>
            <person name="Glavina del Rio T."/>
            <person name="Tice H."/>
            <person name="Bruce D."/>
            <person name="Goodwin L."/>
            <person name="Pitluck S."/>
            <person name="Munk A.C."/>
            <person name="Brettin T."/>
            <person name="Detter J.C."/>
            <person name="Han C."/>
            <person name="Tapia R."/>
            <person name="Larimer F."/>
            <person name="Land M."/>
            <person name="Hauser L."/>
            <person name="Kyrpides N."/>
            <person name="Anderson I."/>
            <person name="Wall J.D."/>
            <person name="Arkin A.P."/>
            <person name="Dehal P."/>
            <person name="Chivian D."/>
            <person name="Giles B."/>
            <person name="Hazen T.C."/>
        </authorList>
    </citation>
    <scope>NUCLEOTIDE SEQUENCE [LARGE SCALE GENOMIC DNA]</scope>
    <source>
        <strain>ATCC 14822 / DSM 2638 / NCIMB 8403 / VKM B-1763</strain>
    </source>
</reference>
<sequence>MAKIQKIKGVADLFPEDSARYAFMEKTARDVFSSYGYGELRVPILEKTELFCRSIGEETDVVQKEMYTFPDRKGRSLTMRPEATAGIVRAYVENKIYQPGKVSKFFTFGPMFRYERPQAGRMRQFHQIDAEIFGAAEPQADAEVLLMLSSFLSNIGLEKLSFELNSLGCPECRPKYNQALKDFLASLDREQLCDDCQRRMDTNPLRVLDCKSKNCKALTENAPTLPDHLCGECREHFDTVIALIDEAGLQYTLNPRLVRGLDYYQRTAFEVTSGDIGAQTAVAGGGRYDGLVESLGGPKKVPAIGFACGMERLAMLLEGEFEPAADFYVALVDERAAKDSLIFGEKLRRSGLKGEVGFTAKSMKAQLRHANKINAQKCFIFGAEEFENGTVTIKDMAEGGEQETVSRDEYFK</sequence>
<proteinExistence type="inferred from homology"/>
<gene>
    <name evidence="1" type="primary">hisS</name>
    <name type="ordered locus">Desal_0142</name>
</gene>
<comment type="catalytic activity">
    <reaction evidence="1">
        <text>tRNA(His) + L-histidine + ATP = L-histidyl-tRNA(His) + AMP + diphosphate + H(+)</text>
        <dbReference type="Rhea" id="RHEA:17313"/>
        <dbReference type="Rhea" id="RHEA-COMP:9665"/>
        <dbReference type="Rhea" id="RHEA-COMP:9689"/>
        <dbReference type="ChEBI" id="CHEBI:15378"/>
        <dbReference type="ChEBI" id="CHEBI:30616"/>
        <dbReference type="ChEBI" id="CHEBI:33019"/>
        <dbReference type="ChEBI" id="CHEBI:57595"/>
        <dbReference type="ChEBI" id="CHEBI:78442"/>
        <dbReference type="ChEBI" id="CHEBI:78527"/>
        <dbReference type="ChEBI" id="CHEBI:456215"/>
        <dbReference type="EC" id="6.1.1.21"/>
    </reaction>
</comment>
<comment type="subunit">
    <text evidence="1">Homodimer.</text>
</comment>
<comment type="subcellular location">
    <subcellularLocation>
        <location evidence="1">Cytoplasm</location>
    </subcellularLocation>
</comment>
<comment type="similarity">
    <text evidence="1">Belongs to the class-II aminoacyl-tRNA synthetase family.</text>
</comment>
<protein>
    <recommendedName>
        <fullName evidence="1">Histidine--tRNA ligase</fullName>
        <ecNumber evidence="1">6.1.1.21</ecNumber>
    </recommendedName>
    <alternativeName>
        <fullName evidence="1">Histidyl-tRNA synthetase</fullName>
        <shortName evidence="1">HisRS</shortName>
    </alternativeName>
</protein>